<proteinExistence type="inferred from homology"/>
<feature type="chain" id="PRO_1000086067" description="Small ribosomal subunit protein uS5">
    <location>
        <begin position="1"/>
        <end position="180"/>
    </location>
</feature>
<feature type="domain" description="S5 DRBM" evidence="1">
    <location>
        <begin position="25"/>
        <end position="88"/>
    </location>
</feature>
<feature type="region of interest" description="Disordered" evidence="2">
    <location>
        <begin position="1"/>
        <end position="26"/>
    </location>
</feature>
<feature type="compositionally biased region" description="Basic and acidic residues" evidence="2">
    <location>
        <begin position="17"/>
        <end position="26"/>
    </location>
</feature>
<sequence length="180" mass="19330">MAEEKDKKQSSRRRNNRRTEKESEWQERVVQIRRVTKVVKGGKKLSFRAIVIVGNERGQVGVGVGKASDVIGAVRKGVADGKKHLVNVPLTRDQSIPHPSTGEGGAAQVLIRPAAPGTGVIAGGAVRTVLELAGVKNVLAKRLGSKSPLNNARAALEALSSLRTFQEVAQSRDIPVEQLY</sequence>
<name>RS5_SYNE7</name>
<gene>
    <name evidence="1" type="primary">rpsE</name>
    <name evidence="1" type="synonym">rps5</name>
    <name type="ordered locus">Synpcc7942_2216</name>
</gene>
<evidence type="ECO:0000255" key="1">
    <source>
        <dbReference type="HAMAP-Rule" id="MF_01307"/>
    </source>
</evidence>
<evidence type="ECO:0000256" key="2">
    <source>
        <dbReference type="SAM" id="MobiDB-lite"/>
    </source>
</evidence>
<evidence type="ECO:0000305" key="3"/>
<keyword id="KW-1185">Reference proteome</keyword>
<keyword id="KW-0687">Ribonucleoprotein</keyword>
<keyword id="KW-0689">Ribosomal protein</keyword>
<keyword id="KW-0694">RNA-binding</keyword>
<keyword id="KW-0699">rRNA-binding</keyword>
<reference key="1">
    <citation type="submission" date="2005-08" db="EMBL/GenBank/DDBJ databases">
        <title>Complete sequence of chromosome 1 of Synechococcus elongatus PCC 7942.</title>
        <authorList>
            <consortium name="US DOE Joint Genome Institute"/>
            <person name="Copeland A."/>
            <person name="Lucas S."/>
            <person name="Lapidus A."/>
            <person name="Barry K."/>
            <person name="Detter J.C."/>
            <person name="Glavina T."/>
            <person name="Hammon N."/>
            <person name="Israni S."/>
            <person name="Pitluck S."/>
            <person name="Schmutz J."/>
            <person name="Larimer F."/>
            <person name="Land M."/>
            <person name="Kyrpides N."/>
            <person name="Lykidis A."/>
            <person name="Golden S."/>
            <person name="Richardson P."/>
        </authorList>
    </citation>
    <scope>NUCLEOTIDE SEQUENCE [LARGE SCALE GENOMIC DNA]</scope>
    <source>
        <strain>ATCC 33912 / PCC 7942 / FACHB-805</strain>
    </source>
</reference>
<organism>
    <name type="scientific">Synechococcus elongatus (strain ATCC 33912 / PCC 7942 / FACHB-805)</name>
    <name type="common">Anacystis nidulans R2</name>
    <dbReference type="NCBI Taxonomy" id="1140"/>
    <lineage>
        <taxon>Bacteria</taxon>
        <taxon>Bacillati</taxon>
        <taxon>Cyanobacteriota</taxon>
        <taxon>Cyanophyceae</taxon>
        <taxon>Synechococcales</taxon>
        <taxon>Synechococcaceae</taxon>
        <taxon>Synechococcus</taxon>
    </lineage>
</organism>
<comment type="function">
    <text evidence="1">With S4 and S12 plays an important role in translational accuracy.</text>
</comment>
<comment type="function">
    <text evidence="1">Located at the back of the 30S subunit body where it stabilizes the conformation of the head with respect to the body.</text>
</comment>
<comment type="subunit">
    <text evidence="1">Part of the 30S ribosomal subunit. Contacts proteins S4 and S8.</text>
</comment>
<comment type="domain">
    <text>The N-terminal domain interacts with the head of the 30S subunit; the C-terminal domain interacts with the body and contacts protein S4. The interaction surface between S4 and S5 is involved in control of translational fidelity.</text>
</comment>
<comment type="similarity">
    <text evidence="1">Belongs to the universal ribosomal protein uS5 family.</text>
</comment>
<dbReference type="EMBL" id="CP000100">
    <property type="protein sequence ID" value="ABB58246.1"/>
    <property type="molecule type" value="Genomic_DNA"/>
</dbReference>
<dbReference type="RefSeq" id="WP_011244191.1">
    <property type="nucleotide sequence ID" value="NZ_JACJTX010000001.1"/>
</dbReference>
<dbReference type="SMR" id="Q31L23"/>
<dbReference type="STRING" id="1140.Synpcc7942_2216"/>
<dbReference type="PaxDb" id="1140-Synpcc7942_2216"/>
<dbReference type="GeneID" id="72431099"/>
<dbReference type="KEGG" id="syf:Synpcc7942_2216"/>
<dbReference type="eggNOG" id="COG0098">
    <property type="taxonomic scope" value="Bacteria"/>
</dbReference>
<dbReference type="HOGENOM" id="CLU_065898_2_2_3"/>
<dbReference type="OrthoDB" id="9809045at2"/>
<dbReference type="BioCyc" id="SYNEL:SYNPCC7942_2216-MONOMER"/>
<dbReference type="Proteomes" id="UP000889800">
    <property type="component" value="Chromosome"/>
</dbReference>
<dbReference type="GO" id="GO:0015935">
    <property type="term" value="C:small ribosomal subunit"/>
    <property type="evidence" value="ECO:0007669"/>
    <property type="project" value="InterPro"/>
</dbReference>
<dbReference type="GO" id="GO:0019843">
    <property type="term" value="F:rRNA binding"/>
    <property type="evidence" value="ECO:0007669"/>
    <property type="project" value="UniProtKB-UniRule"/>
</dbReference>
<dbReference type="GO" id="GO:0003735">
    <property type="term" value="F:structural constituent of ribosome"/>
    <property type="evidence" value="ECO:0007669"/>
    <property type="project" value="InterPro"/>
</dbReference>
<dbReference type="GO" id="GO:0006412">
    <property type="term" value="P:translation"/>
    <property type="evidence" value="ECO:0007669"/>
    <property type="project" value="UniProtKB-UniRule"/>
</dbReference>
<dbReference type="FunFam" id="3.30.160.20:FF:000001">
    <property type="entry name" value="30S ribosomal protein S5"/>
    <property type="match status" value="1"/>
</dbReference>
<dbReference type="FunFam" id="3.30.230.10:FF:000002">
    <property type="entry name" value="30S ribosomal protein S5"/>
    <property type="match status" value="1"/>
</dbReference>
<dbReference type="Gene3D" id="3.30.160.20">
    <property type="match status" value="1"/>
</dbReference>
<dbReference type="Gene3D" id="3.30.230.10">
    <property type="match status" value="1"/>
</dbReference>
<dbReference type="HAMAP" id="MF_01307_B">
    <property type="entry name" value="Ribosomal_uS5_B"/>
    <property type="match status" value="1"/>
</dbReference>
<dbReference type="InterPro" id="IPR020568">
    <property type="entry name" value="Ribosomal_Su5_D2-typ_SF"/>
</dbReference>
<dbReference type="InterPro" id="IPR000851">
    <property type="entry name" value="Ribosomal_uS5"/>
</dbReference>
<dbReference type="InterPro" id="IPR005712">
    <property type="entry name" value="Ribosomal_uS5_bac-type"/>
</dbReference>
<dbReference type="InterPro" id="IPR005324">
    <property type="entry name" value="Ribosomal_uS5_C"/>
</dbReference>
<dbReference type="InterPro" id="IPR013810">
    <property type="entry name" value="Ribosomal_uS5_N"/>
</dbReference>
<dbReference type="InterPro" id="IPR018192">
    <property type="entry name" value="Ribosomal_uS5_N_CS"/>
</dbReference>
<dbReference type="InterPro" id="IPR014721">
    <property type="entry name" value="Ribsml_uS5_D2-typ_fold_subgr"/>
</dbReference>
<dbReference type="NCBIfam" id="TIGR01021">
    <property type="entry name" value="rpsE_bact"/>
    <property type="match status" value="1"/>
</dbReference>
<dbReference type="PANTHER" id="PTHR48277">
    <property type="entry name" value="MITOCHONDRIAL RIBOSOMAL PROTEIN S5"/>
    <property type="match status" value="1"/>
</dbReference>
<dbReference type="PANTHER" id="PTHR48277:SF1">
    <property type="entry name" value="MITOCHONDRIAL RIBOSOMAL PROTEIN S5"/>
    <property type="match status" value="1"/>
</dbReference>
<dbReference type="Pfam" id="PF00333">
    <property type="entry name" value="Ribosomal_S5"/>
    <property type="match status" value="1"/>
</dbReference>
<dbReference type="Pfam" id="PF03719">
    <property type="entry name" value="Ribosomal_S5_C"/>
    <property type="match status" value="1"/>
</dbReference>
<dbReference type="SUPFAM" id="SSF54768">
    <property type="entry name" value="dsRNA-binding domain-like"/>
    <property type="match status" value="1"/>
</dbReference>
<dbReference type="SUPFAM" id="SSF54211">
    <property type="entry name" value="Ribosomal protein S5 domain 2-like"/>
    <property type="match status" value="1"/>
</dbReference>
<dbReference type="PROSITE" id="PS00585">
    <property type="entry name" value="RIBOSOMAL_S5"/>
    <property type="match status" value="1"/>
</dbReference>
<dbReference type="PROSITE" id="PS50881">
    <property type="entry name" value="S5_DSRBD"/>
    <property type="match status" value="1"/>
</dbReference>
<accession>Q31L23</accession>
<protein>
    <recommendedName>
        <fullName evidence="1">Small ribosomal subunit protein uS5</fullName>
    </recommendedName>
    <alternativeName>
        <fullName evidence="3">30S ribosomal protein S5</fullName>
    </alternativeName>
</protein>